<keyword id="KW-0119">Carbohydrate metabolism</keyword>
<keyword id="KW-0963">Cytoplasm</keyword>
<keyword id="KW-0413">Isomerase</keyword>
<keyword id="KW-0460">Magnesium</keyword>
<keyword id="KW-0479">Metal-binding</keyword>
<keyword id="KW-0859">Xylose metabolism</keyword>
<name>XYLA_PSE14</name>
<protein>
    <recommendedName>
        <fullName evidence="1">Xylose isomerase</fullName>
        <ecNumber evidence="1">5.3.1.5</ecNumber>
    </recommendedName>
</protein>
<evidence type="ECO:0000255" key="1">
    <source>
        <dbReference type="HAMAP-Rule" id="MF_00455"/>
    </source>
</evidence>
<feature type="chain" id="PRO_0000236967" description="Xylose isomerase">
    <location>
        <begin position="1"/>
        <end position="438"/>
    </location>
</feature>
<feature type="active site" evidence="1">
    <location>
        <position position="100"/>
    </location>
</feature>
<feature type="active site" evidence="1">
    <location>
        <position position="103"/>
    </location>
</feature>
<feature type="binding site" evidence="1">
    <location>
        <position position="231"/>
    </location>
    <ligand>
        <name>Mg(2+)</name>
        <dbReference type="ChEBI" id="CHEBI:18420"/>
        <label>1</label>
    </ligand>
</feature>
<feature type="binding site" evidence="1">
    <location>
        <position position="267"/>
    </location>
    <ligand>
        <name>Mg(2+)</name>
        <dbReference type="ChEBI" id="CHEBI:18420"/>
        <label>1</label>
    </ligand>
</feature>
<feature type="binding site" evidence="1">
    <location>
        <position position="267"/>
    </location>
    <ligand>
        <name>Mg(2+)</name>
        <dbReference type="ChEBI" id="CHEBI:18420"/>
        <label>2</label>
    </ligand>
</feature>
<feature type="binding site" evidence="1">
    <location>
        <position position="270"/>
    </location>
    <ligand>
        <name>Mg(2+)</name>
        <dbReference type="ChEBI" id="CHEBI:18420"/>
        <label>2</label>
    </ligand>
</feature>
<feature type="binding site" evidence="1">
    <location>
        <position position="295"/>
    </location>
    <ligand>
        <name>Mg(2+)</name>
        <dbReference type="ChEBI" id="CHEBI:18420"/>
        <label>1</label>
    </ligand>
</feature>
<feature type="binding site" evidence="1">
    <location>
        <position position="306"/>
    </location>
    <ligand>
        <name>Mg(2+)</name>
        <dbReference type="ChEBI" id="CHEBI:18420"/>
        <label>2</label>
    </ligand>
</feature>
<feature type="binding site" evidence="1">
    <location>
        <position position="308"/>
    </location>
    <ligand>
        <name>Mg(2+)</name>
        <dbReference type="ChEBI" id="CHEBI:18420"/>
        <label>2</label>
    </ligand>
</feature>
<feature type="binding site" evidence="1">
    <location>
        <position position="338"/>
    </location>
    <ligand>
        <name>Mg(2+)</name>
        <dbReference type="ChEBI" id="CHEBI:18420"/>
        <label>1</label>
    </ligand>
</feature>
<dbReference type="EC" id="5.3.1.5" evidence="1"/>
<dbReference type="EMBL" id="CP000058">
    <property type="protein sequence ID" value="AAZ36203.1"/>
    <property type="molecule type" value="Genomic_DNA"/>
</dbReference>
<dbReference type="RefSeq" id="WP_011168525.1">
    <property type="nucleotide sequence ID" value="NC_005773.3"/>
</dbReference>
<dbReference type="SMR" id="Q48J73"/>
<dbReference type="KEGG" id="psp:PSPPH_2356"/>
<dbReference type="eggNOG" id="COG2115">
    <property type="taxonomic scope" value="Bacteria"/>
</dbReference>
<dbReference type="HOGENOM" id="CLU_037261_1_0_6"/>
<dbReference type="Proteomes" id="UP000000551">
    <property type="component" value="Chromosome"/>
</dbReference>
<dbReference type="GO" id="GO:0005737">
    <property type="term" value="C:cytoplasm"/>
    <property type="evidence" value="ECO:0007669"/>
    <property type="project" value="UniProtKB-SubCell"/>
</dbReference>
<dbReference type="GO" id="GO:0000287">
    <property type="term" value="F:magnesium ion binding"/>
    <property type="evidence" value="ECO:0007669"/>
    <property type="project" value="UniProtKB-UniRule"/>
</dbReference>
<dbReference type="GO" id="GO:0009045">
    <property type="term" value="F:xylose isomerase activity"/>
    <property type="evidence" value="ECO:0007669"/>
    <property type="project" value="UniProtKB-UniRule"/>
</dbReference>
<dbReference type="GO" id="GO:0042732">
    <property type="term" value="P:D-xylose metabolic process"/>
    <property type="evidence" value="ECO:0007669"/>
    <property type="project" value="UniProtKB-UniRule"/>
</dbReference>
<dbReference type="FunFam" id="3.20.20.150:FF:000002">
    <property type="entry name" value="Xylose isomerase"/>
    <property type="match status" value="1"/>
</dbReference>
<dbReference type="Gene3D" id="3.20.20.150">
    <property type="entry name" value="Divalent-metal-dependent TIM barrel enzymes"/>
    <property type="match status" value="1"/>
</dbReference>
<dbReference type="HAMAP" id="MF_00455">
    <property type="entry name" value="Xylose_isom_A"/>
    <property type="match status" value="1"/>
</dbReference>
<dbReference type="InterPro" id="IPR036237">
    <property type="entry name" value="Xyl_isomerase-like_sf"/>
</dbReference>
<dbReference type="InterPro" id="IPR013452">
    <property type="entry name" value="Xylose_isom_bac"/>
</dbReference>
<dbReference type="InterPro" id="IPR001998">
    <property type="entry name" value="Xylose_isomerase"/>
</dbReference>
<dbReference type="NCBIfam" id="NF003998">
    <property type="entry name" value="PRK05474.1"/>
    <property type="match status" value="1"/>
</dbReference>
<dbReference type="NCBIfam" id="TIGR02630">
    <property type="entry name" value="xylose_isom_A"/>
    <property type="match status" value="1"/>
</dbReference>
<dbReference type="PANTHER" id="PTHR48408">
    <property type="match status" value="1"/>
</dbReference>
<dbReference type="PANTHER" id="PTHR48408:SF1">
    <property type="entry name" value="XYLOSE ISOMERASE"/>
    <property type="match status" value="1"/>
</dbReference>
<dbReference type="PRINTS" id="PR00688">
    <property type="entry name" value="XYLOSISMRASE"/>
</dbReference>
<dbReference type="SUPFAM" id="SSF51658">
    <property type="entry name" value="Xylose isomerase-like"/>
    <property type="match status" value="1"/>
</dbReference>
<dbReference type="PROSITE" id="PS51415">
    <property type="entry name" value="XYLOSE_ISOMERASE"/>
    <property type="match status" value="1"/>
</dbReference>
<reference key="1">
    <citation type="journal article" date="2005" name="J. Bacteriol.">
        <title>Whole-genome sequence analysis of Pseudomonas syringae pv. phaseolicola 1448A reveals divergence among pathovars in genes involved in virulence and transposition.</title>
        <authorList>
            <person name="Joardar V."/>
            <person name="Lindeberg M."/>
            <person name="Jackson R.W."/>
            <person name="Selengut J."/>
            <person name="Dodson R."/>
            <person name="Brinkac L.M."/>
            <person name="Daugherty S.C."/>
            <person name="DeBoy R.T."/>
            <person name="Durkin A.S."/>
            <person name="Gwinn Giglio M."/>
            <person name="Madupu R."/>
            <person name="Nelson W.C."/>
            <person name="Rosovitz M.J."/>
            <person name="Sullivan S.A."/>
            <person name="Crabtree J."/>
            <person name="Creasy T."/>
            <person name="Davidsen T.M."/>
            <person name="Haft D.H."/>
            <person name="Zafar N."/>
            <person name="Zhou L."/>
            <person name="Halpin R."/>
            <person name="Holley T."/>
            <person name="Khouri H.M."/>
            <person name="Feldblyum T.V."/>
            <person name="White O."/>
            <person name="Fraser C.M."/>
            <person name="Chatterjee A.K."/>
            <person name="Cartinhour S."/>
            <person name="Schneider D."/>
            <person name="Mansfield J.W."/>
            <person name="Collmer A."/>
            <person name="Buell R."/>
        </authorList>
    </citation>
    <scope>NUCLEOTIDE SEQUENCE [LARGE SCALE GENOMIC DNA]</scope>
    <source>
        <strain>1448A / Race 6</strain>
    </source>
</reference>
<comment type="catalytic activity">
    <reaction evidence="1">
        <text>alpha-D-xylose = alpha-D-xylulofuranose</text>
        <dbReference type="Rhea" id="RHEA:22816"/>
        <dbReference type="ChEBI" id="CHEBI:28518"/>
        <dbReference type="ChEBI" id="CHEBI:188998"/>
        <dbReference type="EC" id="5.3.1.5"/>
    </reaction>
</comment>
<comment type="cofactor">
    <cofactor evidence="1">
        <name>Mg(2+)</name>
        <dbReference type="ChEBI" id="CHEBI:18420"/>
    </cofactor>
    <text evidence="1">Binds 2 magnesium ions per subunit.</text>
</comment>
<comment type="subunit">
    <text evidence="1">Homotetramer.</text>
</comment>
<comment type="subcellular location">
    <subcellularLocation>
        <location evidence="1">Cytoplasm</location>
    </subcellularLocation>
</comment>
<comment type="similarity">
    <text evidence="1">Belongs to the xylose isomerase family.</text>
</comment>
<gene>
    <name evidence="1" type="primary">xylA</name>
    <name type="ordered locus">PSPPH_2356</name>
</gene>
<proteinExistence type="inferred from homology"/>
<sequence length="438" mass="49396">MPYFPAVDKVRYEGPDSDSPLAFRHYDADKLILGKPMREHLRMAACYWHTFVWPGADMFGVGTFKRPWQGSGDPLELAIGKAETAFEFFSKLGIDYYSFHDTDVAPEGSSLKEYRNNFAQMIDQLERHQEQTGIKLLWGTANCFSNPRFAAGAASNPDPEVFAYAATQVFSAMNATQRLKGANYVLWGGREGYETLLNTDLRQEREQLGRFMRMVVEHKHKIGFKGDLLIEPKPQEPTKHQYDYDSATVFGFLQQYGLEKEIKVNIEANHATLAGHSFHHEIATAVSLGIFGSIDANRGDPQNGWDTDQFPNSVEEMTLATYEILKAGGFTNGGYNFDSKVRRQSLDEVDLFHGHVAAMDVLALALERAAAMVQNDKLQQFKDQRYAGWQQPFGKSLLAGEFSLESLAKHAFDKDLNPQAVSGRQELLEGVVNRFIYF</sequence>
<accession>Q48J73</accession>
<organism>
    <name type="scientific">Pseudomonas savastanoi pv. phaseolicola (strain 1448A / Race 6)</name>
    <name type="common">Pseudomonas syringae pv. phaseolicola (strain 1448A / Race 6)</name>
    <dbReference type="NCBI Taxonomy" id="264730"/>
    <lineage>
        <taxon>Bacteria</taxon>
        <taxon>Pseudomonadati</taxon>
        <taxon>Pseudomonadota</taxon>
        <taxon>Gammaproteobacteria</taxon>
        <taxon>Pseudomonadales</taxon>
        <taxon>Pseudomonadaceae</taxon>
        <taxon>Pseudomonas</taxon>
    </lineage>
</organism>